<name>DDRGK_DROVI</name>
<dbReference type="EMBL" id="CH940650">
    <property type="protein sequence ID" value="EDW66915.1"/>
    <property type="molecule type" value="Genomic_DNA"/>
</dbReference>
<dbReference type="RefSeq" id="XP_002053395.1">
    <property type="nucleotide sequence ID" value="XM_002053359.4"/>
</dbReference>
<dbReference type="SMR" id="B4LYB9"/>
<dbReference type="FunCoup" id="B4LYB9">
    <property type="interactions" value="578"/>
</dbReference>
<dbReference type="STRING" id="7244.B4LYB9"/>
<dbReference type="EnsemblMetazoa" id="FBtr0239782">
    <property type="protein sequence ID" value="FBpp0238274"/>
    <property type="gene ID" value="FBgn0210952"/>
</dbReference>
<dbReference type="EnsemblMetazoa" id="XM_002053359.3">
    <property type="protein sequence ID" value="XP_002053395.1"/>
    <property type="gene ID" value="LOC6630124"/>
</dbReference>
<dbReference type="GeneID" id="6630124"/>
<dbReference type="KEGG" id="dvi:6630124"/>
<dbReference type="CTD" id="65992"/>
<dbReference type="eggNOG" id="KOG3054">
    <property type="taxonomic scope" value="Eukaryota"/>
</dbReference>
<dbReference type="HOGENOM" id="CLU_059562_1_0_1"/>
<dbReference type="InParanoid" id="B4LYB9"/>
<dbReference type="OMA" id="EFTRECN"/>
<dbReference type="OrthoDB" id="2285710at2759"/>
<dbReference type="PhylomeDB" id="B4LYB9"/>
<dbReference type="Proteomes" id="UP000008792">
    <property type="component" value="Unassembled WGS sequence"/>
</dbReference>
<dbReference type="GO" id="GO:0005789">
    <property type="term" value="C:endoplasmic reticulum membrane"/>
    <property type="evidence" value="ECO:0007669"/>
    <property type="project" value="UniProtKB-SubCell"/>
</dbReference>
<dbReference type="GO" id="GO:0044389">
    <property type="term" value="F:ubiquitin-like protein ligase binding"/>
    <property type="evidence" value="ECO:0007669"/>
    <property type="project" value="TreeGrafter"/>
</dbReference>
<dbReference type="FunFam" id="1.10.10.10:FF:000143">
    <property type="entry name" value="DDRGK domain-containing protein 1"/>
    <property type="match status" value="1"/>
</dbReference>
<dbReference type="Gene3D" id="1.10.10.10">
    <property type="entry name" value="Winged helix-like DNA-binding domain superfamily/Winged helix DNA-binding domain"/>
    <property type="match status" value="1"/>
</dbReference>
<dbReference type="InterPro" id="IPR019153">
    <property type="entry name" value="DDRGK_dom-contain"/>
</dbReference>
<dbReference type="InterPro" id="IPR050899">
    <property type="entry name" value="DDRGK_domain-containing"/>
</dbReference>
<dbReference type="InterPro" id="IPR036388">
    <property type="entry name" value="WH-like_DNA-bd_sf"/>
</dbReference>
<dbReference type="InterPro" id="IPR036390">
    <property type="entry name" value="WH_DNA-bd_sf"/>
</dbReference>
<dbReference type="PANTHER" id="PTHR48176">
    <property type="entry name" value="DDRGK DOMAIN-CONTAINING PROTEIN 1"/>
    <property type="match status" value="1"/>
</dbReference>
<dbReference type="PANTHER" id="PTHR48176:SF1">
    <property type="entry name" value="DDRGK DOMAIN-CONTAINING PROTEIN 1"/>
    <property type="match status" value="1"/>
</dbReference>
<dbReference type="Pfam" id="PF09756">
    <property type="entry name" value="DDRGK"/>
    <property type="match status" value="1"/>
</dbReference>
<dbReference type="SMART" id="SM01128">
    <property type="entry name" value="DDRGK"/>
    <property type="match status" value="1"/>
</dbReference>
<dbReference type="SUPFAM" id="SSF46785">
    <property type="entry name" value="Winged helix' DNA-binding domain"/>
    <property type="match status" value="1"/>
</dbReference>
<accession>B4LYB9</accession>
<evidence type="ECO:0000250" key="1">
    <source>
        <dbReference type="UniProtKB" id="Q96HY6"/>
    </source>
</evidence>
<evidence type="ECO:0000250" key="2">
    <source>
        <dbReference type="UniProtKB" id="Q9VDD1"/>
    </source>
</evidence>
<evidence type="ECO:0000255" key="3"/>
<evidence type="ECO:0000256" key="4">
    <source>
        <dbReference type="SAM" id="MobiDB-lite"/>
    </source>
</evidence>
<evidence type="ECO:0000305" key="5"/>
<gene>
    <name evidence="2" type="primary">Ddrgk1</name>
    <name type="ORF">GJ23857</name>
</gene>
<feature type="chain" id="PRO_0000391865" description="DDRGK domain-containing protein 1">
    <location>
        <begin position="1"/>
        <end position="307"/>
    </location>
</feature>
<feature type="topological domain" description="Lumenal" evidence="5">
    <location>
        <begin position="1"/>
        <end position="2"/>
    </location>
</feature>
<feature type="transmembrane region" description="Helical" evidence="3">
    <location>
        <begin position="3"/>
        <end position="23"/>
    </location>
</feature>
<feature type="topological domain" description="Cytoplasmic" evidence="5">
    <location>
        <begin position="24"/>
        <end position="307"/>
    </location>
</feature>
<feature type="region of interest" description="Disordered" evidence="4">
    <location>
        <begin position="31"/>
        <end position="175"/>
    </location>
</feature>
<feature type="compositionally biased region" description="Low complexity" evidence="4">
    <location>
        <begin position="52"/>
        <end position="83"/>
    </location>
</feature>
<feature type="compositionally biased region" description="Basic and acidic residues" evidence="4">
    <location>
        <begin position="107"/>
        <end position="175"/>
    </location>
</feature>
<proteinExistence type="inferred from homology"/>
<sequence>MDLILLVGIATALLLILITLYFLQSKNAKTETKAAAQPQRGVPQRAQEGVPRRAQIARNQRNRLRQNQNAPAVAAAAAPAAAVDSDDDEAAAAGDENGPRVPQGAVLDEKMGAKKRAKMEAKEQKRLQREQELHDREQRKVKEAKEDAERKQQEDLDAEVERKKAEADRLAKEERERKEHEEYLKMKAAFSIEEEGFEEGDADDKESLLADFIQYIKDNKVVLLEDLATAFKLKTQQAIDRIQELQENGTLTGVIDDRGKFIYVSEAELAAVAKFIKQRGRVSIAELAESSNNLINLTPVAAGESSA</sequence>
<organism>
    <name type="scientific">Drosophila virilis</name>
    <name type="common">Fruit fly</name>
    <dbReference type="NCBI Taxonomy" id="7244"/>
    <lineage>
        <taxon>Eukaryota</taxon>
        <taxon>Metazoa</taxon>
        <taxon>Ecdysozoa</taxon>
        <taxon>Arthropoda</taxon>
        <taxon>Hexapoda</taxon>
        <taxon>Insecta</taxon>
        <taxon>Pterygota</taxon>
        <taxon>Neoptera</taxon>
        <taxon>Endopterygota</taxon>
        <taxon>Diptera</taxon>
        <taxon>Brachycera</taxon>
        <taxon>Muscomorpha</taxon>
        <taxon>Ephydroidea</taxon>
        <taxon>Drosophilidae</taxon>
        <taxon>Drosophila</taxon>
    </lineage>
</organism>
<comment type="function">
    <text evidence="1 2">Substrate adapter for ufmylation, the covalent attachment of the ubiquitin-like modifier UFM1 to substrate proteins (By similarity). Required for ufmylation of Atg9; protects the nervous system during aging, possibly by stabilizing Atg9 and supporting its function (By similarity).</text>
</comment>
<comment type="subunit">
    <text evidence="2">Interacts with Atg9; the interaction is transient.</text>
</comment>
<comment type="subcellular location">
    <subcellularLocation>
        <location evidence="1">Endoplasmic reticulum membrane</location>
        <topology evidence="3">Single-pass membrane protein</topology>
    </subcellularLocation>
</comment>
<comment type="similarity">
    <text evidence="5">Belongs to the DDRGK1 family.</text>
</comment>
<reference key="1">
    <citation type="journal article" date="2007" name="Nature">
        <title>Evolution of genes and genomes on the Drosophila phylogeny.</title>
        <authorList>
            <consortium name="Drosophila 12 genomes consortium"/>
        </authorList>
    </citation>
    <scope>NUCLEOTIDE SEQUENCE [LARGE SCALE GENOMIC DNA]</scope>
    <source>
        <strain>Tucson 15010-1051.87</strain>
    </source>
</reference>
<keyword id="KW-0256">Endoplasmic reticulum</keyword>
<keyword id="KW-0472">Membrane</keyword>
<keyword id="KW-1185">Reference proteome</keyword>
<keyword id="KW-0812">Transmembrane</keyword>
<keyword id="KW-1133">Transmembrane helix</keyword>
<keyword id="KW-0833">Ubl conjugation pathway</keyword>
<protein>
    <recommendedName>
        <fullName>DDRGK domain-containing protein 1</fullName>
    </recommendedName>
</protein>